<evidence type="ECO:0000250" key="1"/>
<evidence type="ECO:0000250" key="2">
    <source>
        <dbReference type="UniProtKB" id="Q06071"/>
    </source>
</evidence>
<evidence type="ECO:0000305" key="3"/>
<name>BL1S1_YEAS7</name>
<comment type="function">
    <text evidence="1">Component of the biogenesis of lysosome-related organelles complex-1 (BLOC-1), a complex involved in endosomal cargo sorting.</text>
</comment>
<comment type="subunit">
    <text evidence="1">Component of the biogenesis of lysosome-related organelles complex-1 (BLOC-1) composed of at least BLI1, BLS1, CNL1, KXD1, SNN1 and VAB2.</text>
</comment>
<comment type="subcellular location">
    <subcellularLocation>
        <location evidence="1">Endosome</location>
    </subcellularLocation>
</comment>
<comment type="similarity">
    <text evidence="3">Belongs to the BLOC1S1 family.</text>
</comment>
<comment type="sequence caution" evidence="3">
    <conflict type="erroneous initiation">
        <sequence resource="EMBL-CDS" id="EDN59309"/>
    </conflict>
    <text>Truncated N-terminus.</text>
</comment>
<proteinExistence type="inferred from homology"/>
<organism>
    <name type="scientific">Saccharomyces cerevisiae (strain YJM789)</name>
    <name type="common">Baker's yeast</name>
    <dbReference type="NCBI Taxonomy" id="307796"/>
    <lineage>
        <taxon>Eukaryota</taxon>
        <taxon>Fungi</taxon>
        <taxon>Dikarya</taxon>
        <taxon>Ascomycota</taxon>
        <taxon>Saccharomycotina</taxon>
        <taxon>Saccharomycetes</taxon>
        <taxon>Saccharomycetales</taxon>
        <taxon>Saccharomycetaceae</taxon>
        <taxon>Saccharomyces</taxon>
    </lineage>
</organism>
<keyword id="KW-0967">Endosome</keyword>
<keyword id="KW-0597">Phosphoprotein</keyword>
<keyword id="KW-0813">Transport</keyword>
<gene>
    <name type="primary">BLS1</name>
    <name type="ORF">SCY_3959</name>
</gene>
<dbReference type="EMBL" id="AAFW02000171">
    <property type="protein sequence ID" value="EDN59309.1"/>
    <property type="status" value="ALT_INIT"/>
    <property type="molecule type" value="Genomic_DNA"/>
</dbReference>
<dbReference type="SMR" id="A7A1T1"/>
<dbReference type="HOGENOM" id="CLU_150164_0_0_1"/>
<dbReference type="OrthoDB" id="40475at4893"/>
<dbReference type="Proteomes" id="UP000007060">
    <property type="component" value="Unassembled WGS sequence"/>
</dbReference>
<dbReference type="GO" id="GO:0005768">
    <property type="term" value="C:endosome"/>
    <property type="evidence" value="ECO:0007669"/>
    <property type="project" value="UniProtKB-SubCell"/>
</dbReference>
<accession>A7A1T1</accession>
<protein>
    <recommendedName>
        <fullName>Biogenesis of lysosome-related organelles complex 1 subunit BLS1</fullName>
        <shortName>BLOC-1 subunit BLS1</shortName>
    </recommendedName>
    <alternativeName>
        <fullName>BLOS1-homolog</fullName>
    </alternativeName>
</protein>
<reference key="1">
    <citation type="journal article" date="2007" name="Proc. Natl. Acad. Sci. U.S.A.">
        <title>Genome sequencing and comparative analysis of Saccharomyces cerevisiae strain YJM789.</title>
        <authorList>
            <person name="Wei W."/>
            <person name="McCusker J.H."/>
            <person name="Hyman R.W."/>
            <person name="Jones T."/>
            <person name="Ning Y."/>
            <person name="Cao Z."/>
            <person name="Gu Z."/>
            <person name="Bruno D."/>
            <person name="Miranda M."/>
            <person name="Nguyen M."/>
            <person name="Wilhelmy J."/>
            <person name="Komp C."/>
            <person name="Tamse R."/>
            <person name="Wang X."/>
            <person name="Jia P."/>
            <person name="Luedi P."/>
            <person name="Oefner P.J."/>
            <person name="David L."/>
            <person name="Dietrich F.S."/>
            <person name="Li Y."/>
            <person name="Davis R.W."/>
            <person name="Steinmetz L.M."/>
        </authorList>
    </citation>
    <scope>NUCLEOTIDE SEQUENCE [LARGE SCALE GENOMIC DNA]</scope>
    <source>
        <strain>YJM789</strain>
    </source>
</reference>
<feature type="chain" id="PRO_0000410634" description="Biogenesis of lysosome-related organelles complex 1 subunit BLS1">
    <location>
        <begin position="1"/>
        <end position="122"/>
    </location>
</feature>
<feature type="modified residue" description="Phosphoserine" evidence="2">
    <location>
        <position position="33"/>
    </location>
</feature>
<sequence>MFLTFSMCVNWIIVKMPNRSEELDRLLDKIINSPHRTEASKTLQEIENNQSYILNVQLKKLLRLHDDSFKNKCVSPINYMLEKYTPYMGHTEALQKEAELVDRDLRIIEMTYQLIKKNRNSK</sequence>